<reference key="1">
    <citation type="journal article" date="2008" name="PLoS ONE">
        <title>Comparative analysis of Acinetobacters: three genomes for three lifestyles.</title>
        <authorList>
            <person name="Vallenet D."/>
            <person name="Nordmann P."/>
            <person name="Barbe V."/>
            <person name="Poirel L."/>
            <person name="Mangenot S."/>
            <person name="Bataille E."/>
            <person name="Dossat C."/>
            <person name="Gas S."/>
            <person name="Kreimeyer A."/>
            <person name="Lenoble P."/>
            <person name="Oztas S."/>
            <person name="Poulain J."/>
            <person name="Segurens B."/>
            <person name="Robert C."/>
            <person name="Abergel C."/>
            <person name="Claverie J.-M."/>
            <person name="Raoult D."/>
            <person name="Medigue C."/>
            <person name="Weissenbach J."/>
            <person name="Cruveiller S."/>
        </authorList>
    </citation>
    <scope>NUCLEOTIDE SEQUENCE [LARGE SCALE GENOMIC DNA]</scope>
    <source>
        <strain>AYE</strain>
    </source>
</reference>
<dbReference type="EC" id="1.1.5.4" evidence="1"/>
<dbReference type="EMBL" id="CU459141">
    <property type="protein sequence ID" value="CAM87696.1"/>
    <property type="molecule type" value="Genomic_DNA"/>
</dbReference>
<dbReference type="RefSeq" id="WP_000714076.1">
    <property type="nucleotide sequence ID" value="NZ_JBDGFB010000015.1"/>
</dbReference>
<dbReference type="SMR" id="B0V946"/>
<dbReference type="EnsemblBacteria" id="CAM87696">
    <property type="protein sequence ID" value="CAM87696"/>
    <property type="gene ID" value="ABAYE2869"/>
</dbReference>
<dbReference type="KEGG" id="aby:ABAYE2869"/>
<dbReference type="HOGENOM" id="CLU_028151_0_0_6"/>
<dbReference type="UniPathway" id="UPA00223">
    <property type="reaction ID" value="UER01008"/>
</dbReference>
<dbReference type="GO" id="GO:0047545">
    <property type="term" value="F:2-hydroxyglutarate dehydrogenase activity"/>
    <property type="evidence" value="ECO:0007669"/>
    <property type="project" value="TreeGrafter"/>
</dbReference>
<dbReference type="GO" id="GO:0008924">
    <property type="term" value="F:L-malate dehydrogenase (quinone) activity"/>
    <property type="evidence" value="ECO:0007669"/>
    <property type="project" value="UniProtKB-UniRule"/>
</dbReference>
<dbReference type="GO" id="GO:0006099">
    <property type="term" value="P:tricarboxylic acid cycle"/>
    <property type="evidence" value="ECO:0007669"/>
    <property type="project" value="UniProtKB-UniRule"/>
</dbReference>
<dbReference type="HAMAP" id="MF_00212">
    <property type="entry name" value="MQO"/>
    <property type="match status" value="1"/>
</dbReference>
<dbReference type="InterPro" id="IPR036188">
    <property type="entry name" value="FAD/NAD-bd_sf"/>
</dbReference>
<dbReference type="InterPro" id="IPR006231">
    <property type="entry name" value="MQO"/>
</dbReference>
<dbReference type="NCBIfam" id="TIGR01320">
    <property type="entry name" value="mal_quin_oxido"/>
    <property type="match status" value="1"/>
</dbReference>
<dbReference type="NCBIfam" id="NF003603">
    <property type="entry name" value="PRK05257.1-1"/>
    <property type="match status" value="1"/>
</dbReference>
<dbReference type="NCBIfam" id="NF003605">
    <property type="entry name" value="PRK05257.1-4"/>
    <property type="match status" value="1"/>
</dbReference>
<dbReference type="NCBIfam" id="NF003606">
    <property type="entry name" value="PRK05257.2-1"/>
    <property type="match status" value="1"/>
</dbReference>
<dbReference type="NCBIfam" id="NF003611">
    <property type="entry name" value="PRK05257.3-2"/>
    <property type="match status" value="1"/>
</dbReference>
<dbReference type="NCBIfam" id="NF009875">
    <property type="entry name" value="PRK13339.1"/>
    <property type="match status" value="1"/>
</dbReference>
<dbReference type="PANTHER" id="PTHR43104">
    <property type="entry name" value="L-2-HYDROXYGLUTARATE DEHYDROGENASE, MITOCHONDRIAL"/>
    <property type="match status" value="1"/>
</dbReference>
<dbReference type="PANTHER" id="PTHR43104:SF2">
    <property type="entry name" value="L-2-HYDROXYGLUTARATE DEHYDROGENASE, MITOCHONDRIAL"/>
    <property type="match status" value="1"/>
</dbReference>
<dbReference type="Pfam" id="PF06039">
    <property type="entry name" value="Mqo"/>
    <property type="match status" value="1"/>
</dbReference>
<dbReference type="SUPFAM" id="SSF51905">
    <property type="entry name" value="FAD/NAD(P)-binding domain"/>
    <property type="match status" value="1"/>
</dbReference>
<comment type="catalytic activity">
    <reaction evidence="1">
        <text>(S)-malate + a quinone = a quinol + oxaloacetate</text>
        <dbReference type="Rhea" id="RHEA:46012"/>
        <dbReference type="ChEBI" id="CHEBI:15589"/>
        <dbReference type="ChEBI" id="CHEBI:16452"/>
        <dbReference type="ChEBI" id="CHEBI:24646"/>
        <dbReference type="ChEBI" id="CHEBI:132124"/>
        <dbReference type="EC" id="1.1.5.4"/>
    </reaction>
</comment>
<comment type="cofactor">
    <cofactor evidence="1">
        <name>FAD</name>
        <dbReference type="ChEBI" id="CHEBI:57692"/>
    </cofactor>
</comment>
<comment type="pathway">
    <text evidence="1">Carbohydrate metabolism; tricarboxylic acid cycle; oxaloacetate from (S)-malate (quinone route): step 1/1.</text>
</comment>
<comment type="similarity">
    <text evidence="1">Belongs to the MQO family.</text>
</comment>
<organism>
    <name type="scientific">Acinetobacter baumannii (strain AYE)</name>
    <dbReference type="NCBI Taxonomy" id="509173"/>
    <lineage>
        <taxon>Bacteria</taxon>
        <taxon>Pseudomonadati</taxon>
        <taxon>Pseudomonadota</taxon>
        <taxon>Gammaproteobacteria</taxon>
        <taxon>Moraxellales</taxon>
        <taxon>Moraxellaceae</taxon>
        <taxon>Acinetobacter</taxon>
        <taxon>Acinetobacter calcoaceticus/baumannii complex</taxon>
    </lineage>
</organism>
<sequence length="546" mass="60451">MKKFLKYLLVLIILILIAGIVFLFRPIASKQVQTAKDEPVVDAVLVGGGIMSATLGTYFTELEPNWQIRMYERLDQVAQESSNGFNNAGTGHSGFMEMNYTEEKNGKMEIAKAEKVASQFEVAKQFWSYQVKQGVLAEPKTFINPVPHIAFVWGDNVKFLEKRYAAMIQSPLFKGMKFTEDPAVIKQWAPLVMTDRDPTQKVAATRMEVGSDVNYGSITKQLVNHLNQNPNFKLQTSTEVTGISQNDDKTWTVSFKNLKTGKTDHVKTRFVFIGAGGAAVKLLQLTGLPEAKQYAGFPVGGEFLITDNPAITAQHTAKVYGRAELGAPPMSVPHIDTRYIDGKKYVLFGPFATYSNKFLKNGSQLDLLASTNKSNVLPMTTVGLENLDLVKYLVSQVMMSDEDRLNELRKYYPDAKAEDWRLSQGGQRVQIIKKEPGKPATLQFGTEIFASKDGAVTALLGASPGASTSPYIMLNLLEKAFPQQTEGKWNQKLHEIVVSYKQDLSKDPVLLDKVRQYTSSTLGLNYTSPFKAANDETAAAPVAKAN</sequence>
<gene>
    <name evidence="1" type="primary">mqo</name>
    <name type="ordered locus">ABAYE2869</name>
</gene>
<evidence type="ECO:0000255" key="1">
    <source>
        <dbReference type="HAMAP-Rule" id="MF_00212"/>
    </source>
</evidence>
<protein>
    <recommendedName>
        <fullName evidence="1">Probable malate:quinone oxidoreductase</fullName>
        <ecNumber evidence="1">1.1.5.4</ecNumber>
    </recommendedName>
    <alternativeName>
        <fullName evidence="1">MQO</fullName>
    </alternativeName>
    <alternativeName>
        <fullName evidence="1">Malate dehydrogenase [quinone]</fullName>
    </alternativeName>
</protein>
<keyword id="KW-0274">FAD</keyword>
<keyword id="KW-0285">Flavoprotein</keyword>
<keyword id="KW-0560">Oxidoreductase</keyword>
<keyword id="KW-0816">Tricarboxylic acid cycle</keyword>
<name>MQO_ACIBY</name>
<feature type="chain" id="PRO_1000099865" description="Probable malate:quinone oxidoreductase">
    <location>
        <begin position="1"/>
        <end position="546"/>
    </location>
</feature>
<accession>B0V946</accession>
<proteinExistence type="inferred from homology"/>